<protein>
    <recommendedName>
        <fullName>Guanine nucleotide-binding protein subunit beta</fullName>
    </recommendedName>
</protein>
<accession>P23232</accession>
<evidence type="ECO:0000305" key="1"/>
<name>GBB_LOLFO</name>
<reference key="1">
    <citation type="journal article" date="1991" name="Biochem. J.">
        <title>Sequence of the beta-subunit of the phosphatidylinositol-specific phospholipase C-directed GTP-binding protein from squid (Loligo forbesi) photoreceptors.</title>
        <authorList>
            <person name="Ryba N.J.P."/>
            <person name="Pottinger J.D.D."/>
            <person name="Keen J.N."/>
            <person name="Findlay J.B.C."/>
        </authorList>
    </citation>
    <scope>NUCLEOTIDE SEQUENCE [MRNA]</scope>
    <source>
        <tissue>Retina</tissue>
    </source>
</reference>
<sequence>MTSELEALRQETEQLKNQIREARKAAADTTLAMATANVEPVGRIQMRTRRTLRGHLAKIYAMHWASDSRNLVSASQDGKLIVWDGYTTNKVHAIPLRSSWVMTCAYAPSGNYVACGGLDNICSIYSLKTREGNVRVSRELPGHTGYLSCCRFIDDNQIVTSSGDMTCALWNIETGNQITSFGGHTGDVMSLSLAPDMRTFVSGACDASAKLFDIRDGICKQTFTGHESDINAITYFPNGFAFATGSDDATCRLFDIRADQEIGMYSHDNIICGITSVAFSKSGRLLLGGYDDFNCNVWDVLKQERAGVLAGHDNRVSCLGVTEDGMAVATGSWDSFLKIWN</sequence>
<dbReference type="EMBL" id="X56757">
    <property type="protein sequence ID" value="CAA40077.1"/>
    <property type="molecule type" value="mRNA"/>
</dbReference>
<dbReference type="PIR" id="S13302">
    <property type="entry name" value="RGOOBE"/>
</dbReference>
<dbReference type="SMR" id="P23232"/>
<dbReference type="GO" id="GO:0007165">
    <property type="term" value="P:signal transduction"/>
    <property type="evidence" value="ECO:0007669"/>
    <property type="project" value="UniProtKB-KW"/>
</dbReference>
<dbReference type="CDD" id="cd00200">
    <property type="entry name" value="WD40"/>
    <property type="match status" value="1"/>
</dbReference>
<dbReference type="FunFam" id="2.130.10.10:FF:000007">
    <property type="entry name" value="Guanine nucleotide-binding protein G(I)/G(S)/G(T) subunit beta-1"/>
    <property type="match status" value="1"/>
</dbReference>
<dbReference type="Gene3D" id="2.130.10.10">
    <property type="entry name" value="YVTN repeat-like/Quinoprotein amine dehydrogenase"/>
    <property type="match status" value="1"/>
</dbReference>
<dbReference type="InterPro" id="IPR020472">
    <property type="entry name" value="G-protein_beta_WD-40_rep"/>
</dbReference>
<dbReference type="InterPro" id="IPR001632">
    <property type="entry name" value="Gprotein_B"/>
</dbReference>
<dbReference type="InterPro" id="IPR016346">
    <property type="entry name" value="Guanine_nucleotide-bd_bsu"/>
</dbReference>
<dbReference type="InterPro" id="IPR015943">
    <property type="entry name" value="WD40/YVTN_repeat-like_dom_sf"/>
</dbReference>
<dbReference type="InterPro" id="IPR019775">
    <property type="entry name" value="WD40_repeat_CS"/>
</dbReference>
<dbReference type="InterPro" id="IPR036322">
    <property type="entry name" value="WD40_repeat_dom_sf"/>
</dbReference>
<dbReference type="InterPro" id="IPR001680">
    <property type="entry name" value="WD40_rpt"/>
</dbReference>
<dbReference type="PANTHER" id="PTHR19850">
    <property type="entry name" value="GUANINE NUCLEOTIDE-BINDING PROTEIN BETA G PROTEIN BETA"/>
    <property type="match status" value="1"/>
</dbReference>
<dbReference type="Pfam" id="PF25391">
    <property type="entry name" value="WD40_Gbeta"/>
    <property type="match status" value="1"/>
</dbReference>
<dbReference type="PIRSF" id="PIRSF002394">
    <property type="entry name" value="GN-bd_beta"/>
    <property type="match status" value="1"/>
</dbReference>
<dbReference type="PRINTS" id="PR00319">
    <property type="entry name" value="GPROTEINB"/>
</dbReference>
<dbReference type="PRINTS" id="PR00320">
    <property type="entry name" value="GPROTEINBRPT"/>
</dbReference>
<dbReference type="SMART" id="SM00320">
    <property type="entry name" value="WD40"/>
    <property type="match status" value="7"/>
</dbReference>
<dbReference type="SUPFAM" id="SSF50978">
    <property type="entry name" value="WD40 repeat-like"/>
    <property type="match status" value="1"/>
</dbReference>
<dbReference type="PROSITE" id="PS00678">
    <property type="entry name" value="WD_REPEATS_1"/>
    <property type="match status" value="3"/>
</dbReference>
<dbReference type="PROSITE" id="PS50082">
    <property type="entry name" value="WD_REPEATS_2"/>
    <property type="match status" value="5"/>
</dbReference>
<dbReference type="PROSITE" id="PS50294">
    <property type="entry name" value="WD_REPEATS_REGION"/>
    <property type="match status" value="1"/>
</dbReference>
<comment type="function">
    <text>Guanine nucleotide-binding proteins (G proteins) are involved as a modulator or transducer in various transmembrane signaling systems. The beta and gamma chains are required for the GTPase activity, for replacement of GDP by GTP, and for G protein-effector interaction.</text>
</comment>
<comment type="subunit">
    <text>G proteins are composed of 3 units, alpha, beta and gamma.</text>
</comment>
<comment type="similarity">
    <text evidence="1">Belongs to the WD repeat G protein beta family.</text>
</comment>
<keyword id="KW-0677">Repeat</keyword>
<keyword id="KW-0807">Transducer</keyword>
<keyword id="KW-0853">WD repeat</keyword>
<organism>
    <name type="scientific">Loligo forbesii</name>
    <name type="common">Veined squid</name>
    <dbReference type="NCBI Taxonomy" id="6618"/>
    <lineage>
        <taxon>Eukaryota</taxon>
        <taxon>Metazoa</taxon>
        <taxon>Spiralia</taxon>
        <taxon>Lophotrochozoa</taxon>
        <taxon>Mollusca</taxon>
        <taxon>Cephalopoda</taxon>
        <taxon>Coleoidea</taxon>
        <taxon>Decapodiformes</taxon>
        <taxon>Myopsida</taxon>
        <taxon>Loliginidae</taxon>
        <taxon>Loligo</taxon>
    </lineage>
</organism>
<proteinExistence type="evidence at transcript level"/>
<feature type="chain" id="PRO_0000127717" description="Guanine nucleotide-binding protein subunit beta">
    <location>
        <begin position="1"/>
        <end position="341"/>
    </location>
</feature>
<feature type="repeat" description="WD 1">
    <location>
        <begin position="54"/>
        <end position="84"/>
    </location>
</feature>
<feature type="repeat" description="WD 2">
    <location>
        <begin position="96"/>
        <end position="126"/>
    </location>
</feature>
<feature type="repeat" description="WD 3">
    <location>
        <begin position="142"/>
        <end position="171"/>
    </location>
</feature>
<feature type="repeat" description="WD 4">
    <location>
        <begin position="183"/>
        <end position="213"/>
    </location>
</feature>
<feature type="repeat" description="WD 5">
    <location>
        <begin position="225"/>
        <end position="255"/>
    </location>
</feature>
<feature type="repeat" description="WD 6">
    <location>
        <begin position="269"/>
        <end position="299"/>
    </location>
</feature>
<feature type="repeat" description="WD 7">
    <location>
        <begin position="311"/>
        <end position="341"/>
    </location>
</feature>